<evidence type="ECO:0000255" key="1">
    <source>
        <dbReference type="HAMAP-Rule" id="MF_01390"/>
    </source>
</evidence>
<dbReference type="EMBL" id="AF531813">
    <property type="protein sequence ID" value="AAP87873.1"/>
    <property type="molecule type" value="Genomic_DNA"/>
</dbReference>
<dbReference type="GO" id="GO:0009507">
    <property type="term" value="C:chloroplast"/>
    <property type="evidence" value="ECO:0007669"/>
    <property type="project" value="UniProtKB-SubCell"/>
</dbReference>
<dbReference type="GO" id="GO:0003723">
    <property type="term" value="F:RNA binding"/>
    <property type="evidence" value="ECO:0007669"/>
    <property type="project" value="UniProtKB-KW"/>
</dbReference>
<dbReference type="GO" id="GO:0006397">
    <property type="term" value="P:mRNA processing"/>
    <property type="evidence" value="ECO:0007669"/>
    <property type="project" value="UniProtKB-KW"/>
</dbReference>
<dbReference type="GO" id="GO:0008380">
    <property type="term" value="P:RNA splicing"/>
    <property type="evidence" value="ECO:0007669"/>
    <property type="project" value="UniProtKB-UniRule"/>
</dbReference>
<dbReference type="GO" id="GO:0008033">
    <property type="term" value="P:tRNA processing"/>
    <property type="evidence" value="ECO:0007669"/>
    <property type="project" value="UniProtKB-KW"/>
</dbReference>
<dbReference type="HAMAP" id="MF_01390">
    <property type="entry name" value="MatK"/>
    <property type="match status" value="1"/>
</dbReference>
<dbReference type="InterPro" id="IPR024937">
    <property type="entry name" value="Domain_X"/>
</dbReference>
<dbReference type="InterPro" id="IPR002866">
    <property type="entry name" value="Maturase_MatK"/>
</dbReference>
<dbReference type="InterPro" id="IPR024942">
    <property type="entry name" value="Maturase_MatK_N"/>
</dbReference>
<dbReference type="PANTHER" id="PTHR34811">
    <property type="entry name" value="MATURASE K"/>
    <property type="match status" value="1"/>
</dbReference>
<dbReference type="PANTHER" id="PTHR34811:SF1">
    <property type="entry name" value="MATURASE K"/>
    <property type="match status" value="1"/>
</dbReference>
<dbReference type="Pfam" id="PF01348">
    <property type="entry name" value="Intron_maturas2"/>
    <property type="match status" value="1"/>
</dbReference>
<dbReference type="Pfam" id="PF01824">
    <property type="entry name" value="MatK_N"/>
    <property type="match status" value="1"/>
</dbReference>
<organism>
    <name type="scientific">Uncarina grandidieri</name>
    <name type="common">Mouse trap tree</name>
    <name type="synonym">Harpagophytum grandidieri</name>
    <dbReference type="NCBI Taxonomy" id="4184"/>
    <lineage>
        <taxon>Eukaryota</taxon>
        <taxon>Viridiplantae</taxon>
        <taxon>Streptophyta</taxon>
        <taxon>Embryophyta</taxon>
        <taxon>Tracheophyta</taxon>
        <taxon>Spermatophyta</taxon>
        <taxon>Magnoliopsida</taxon>
        <taxon>eudicotyledons</taxon>
        <taxon>Gunneridae</taxon>
        <taxon>Pentapetalae</taxon>
        <taxon>asterids</taxon>
        <taxon>lamiids</taxon>
        <taxon>Lamiales</taxon>
        <taxon>Pedaliaceae</taxon>
        <taxon>Uncarina</taxon>
    </lineage>
</organism>
<gene>
    <name evidence="1" type="primary">matK</name>
</gene>
<reference key="1">
    <citation type="journal article" date="2004" name="Plant Biol.">
        <title>Evolution of carnivory in lentibulariaceae and the Lamiales.</title>
        <authorList>
            <person name="Mueller K.F."/>
            <person name="Borsch T."/>
            <person name="Legendre L."/>
            <person name="Porembski S."/>
            <person name="Theisen I."/>
            <person name="Barthlott W."/>
        </authorList>
    </citation>
    <scope>NUCLEOTIDE SEQUENCE [GENOMIC DNA]</scope>
</reference>
<keyword id="KW-0150">Chloroplast</keyword>
<keyword id="KW-0507">mRNA processing</keyword>
<keyword id="KW-0934">Plastid</keyword>
<keyword id="KW-0694">RNA-binding</keyword>
<keyword id="KW-0819">tRNA processing</keyword>
<protein>
    <recommendedName>
        <fullName evidence="1">Maturase K</fullName>
    </recommendedName>
    <alternativeName>
        <fullName evidence="1">Intron maturase</fullName>
    </alternativeName>
</protein>
<name>MATK_UNCGR</name>
<accession>Q7YJZ1</accession>
<feature type="chain" id="PRO_0000143416" description="Maturase K">
    <location>
        <begin position="1"/>
        <end position="506"/>
    </location>
</feature>
<sequence>MEEIQRYLQLERSQQHDFLYPLILQEYIYAFAHDRGFGRSILSEKSGYDNKSSLLIVKRLITRMYQQNHFLISPNDSNQNPFWARNNNLYSQIISEGFAFIVEIPFSLQLISCLEGKKIVKSQNLRSIHSIFPFLEDNFSHLNFVLDILIPHPVHVEILVQTLRYWVKDAASLHLLRFFLNEYCKWNSLITPKKASSSFSKRNQRLFLFLYNSHVCEYEAIFVFLRNQSSHLRSTSSGVLLERIYFYGKIERLVNVFVKVKDFQANLWLVKEPCMHYIRYQRKSILASKGTSLFMNKWKCYLVTFWQWHFSLWFHPRRIYINQLSNHSLEFLGYLSSVRMNPSVVRSQILENSFLINNAIKKFDTLVPIIPLIASLAKVKFCNVLGHPISKPVRADLSDSNIIDRFGRICRNLSHYHSGSSNKKSLYRIKYILRLSCARTLARKHKSTVRAFLKRLGSELLEEFLMSEEDVLFLTFPKVSSTLRGVYRSRIWYLDIVAINDLANHK</sequence>
<proteinExistence type="inferred from homology"/>
<comment type="function">
    <text evidence="1">Usually encoded in the trnK tRNA gene intron. Probably assists in splicing its own and other chloroplast group II introns.</text>
</comment>
<comment type="subcellular location">
    <subcellularLocation>
        <location>Plastid</location>
        <location>Chloroplast</location>
    </subcellularLocation>
</comment>
<comment type="similarity">
    <text evidence="1">Belongs to the intron maturase 2 family. MatK subfamily.</text>
</comment>
<geneLocation type="chloroplast"/>